<protein>
    <recommendedName>
        <fullName evidence="2">Elongation factor Tu</fullName>
        <shortName evidence="2">EF-Tu</shortName>
        <ecNumber evidence="2">3.6.5.3</ecNumber>
    </recommendedName>
</protein>
<gene>
    <name evidence="2" type="primary">tuf</name>
    <name type="ordered locus">LBUL_0709</name>
</gene>
<reference key="1">
    <citation type="journal article" date="2006" name="Proc. Natl. Acad. Sci. U.S.A.">
        <title>Comparative genomics of the lactic acid bacteria.</title>
        <authorList>
            <person name="Makarova K.S."/>
            <person name="Slesarev A."/>
            <person name="Wolf Y.I."/>
            <person name="Sorokin A."/>
            <person name="Mirkin B."/>
            <person name="Koonin E.V."/>
            <person name="Pavlov A."/>
            <person name="Pavlova N."/>
            <person name="Karamychev V."/>
            <person name="Polouchine N."/>
            <person name="Shakhova V."/>
            <person name="Grigoriev I."/>
            <person name="Lou Y."/>
            <person name="Rohksar D."/>
            <person name="Lucas S."/>
            <person name="Huang K."/>
            <person name="Goodstein D.M."/>
            <person name="Hawkins T."/>
            <person name="Plengvidhya V."/>
            <person name="Welker D."/>
            <person name="Hughes J."/>
            <person name="Goh Y."/>
            <person name="Benson A."/>
            <person name="Baldwin K."/>
            <person name="Lee J.-H."/>
            <person name="Diaz-Muniz I."/>
            <person name="Dosti B."/>
            <person name="Smeianov V."/>
            <person name="Wechter W."/>
            <person name="Barabote R."/>
            <person name="Lorca G."/>
            <person name="Altermann E."/>
            <person name="Barrangou R."/>
            <person name="Ganesan B."/>
            <person name="Xie Y."/>
            <person name="Rawsthorne H."/>
            <person name="Tamir D."/>
            <person name="Parker C."/>
            <person name="Breidt F."/>
            <person name="Broadbent J.R."/>
            <person name="Hutkins R."/>
            <person name="O'Sullivan D."/>
            <person name="Steele J."/>
            <person name="Unlu G."/>
            <person name="Saier M.H. Jr."/>
            <person name="Klaenhammer T."/>
            <person name="Richardson P."/>
            <person name="Kozyavkin S."/>
            <person name="Weimer B.C."/>
            <person name="Mills D.A."/>
        </authorList>
    </citation>
    <scope>NUCLEOTIDE SEQUENCE [LARGE SCALE GENOMIC DNA]</scope>
    <source>
        <strain>ATCC BAA-365 / Lb-18</strain>
    </source>
</reference>
<sequence>MAEKEHYVRTKPHVNIGTIGHVDHGKTTLTAAITTVLAKKGLAQAEDYSQIDAAPEEKERGITINTAHVEYETEKRHYAHMDAPGHADYIKNMITGAAQMDGAILVVAATDGPMPQTREHILLARQVGVNSIVVFLNKCDLVDDPELIDLVEMEVRDLLSEYGYPGDDVPVVRGSALKALEGDEEAQKKIEELMDVVDEYIPTPERETDKPFLMPVEDVFTITGRGTVASGRIDRGTVKVGDSVEIVGLVEKVLTSVVTGLEMFHKTLDLGEAGDNVGVLLRGVDRDQIVRGQVLAAPGSIKTHKTFKGQVYILSKDEGGRHTPFFSDYRPQFYFHTTDITGEIELPEGTEMVMPGDNTEFSVTLIKPAAIEVGTKFTIREGGRTVGAGQVTEIDD</sequence>
<dbReference type="EC" id="3.6.5.3" evidence="2"/>
<dbReference type="EMBL" id="CP000412">
    <property type="protein sequence ID" value="ABJ58335.1"/>
    <property type="molecule type" value="Genomic_DNA"/>
</dbReference>
<dbReference type="RefSeq" id="WP_003619230.1">
    <property type="nucleotide sequence ID" value="NC_008529.1"/>
</dbReference>
<dbReference type="SMR" id="Q04B37"/>
<dbReference type="KEGG" id="lbu:LBUL_0709"/>
<dbReference type="HOGENOM" id="CLU_007265_0_1_9"/>
<dbReference type="BioCyc" id="LDEL321956:LBUL_RS03390-MONOMER"/>
<dbReference type="GO" id="GO:0005829">
    <property type="term" value="C:cytosol"/>
    <property type="evidence" value="ECO:0007669"/>
    <property type="project" value="TreeGrafter"/>
</dbReference>
<dbReference type="GO" id="GO:0005525">
    <property type="term" value="F:GTP binding"/>
    <property type="evidence" value="ECO:0007669"/>
    <property type="project" value="UniProtKB-UniRule"/>
</dbReference>
<dbReference type="GO" id="GO:0003924">
    <property type="term" value="F:GTPase activity"/>
    <property type="evidence" value="ECO:0007669"/>
    <property type="project" value="InterPro"/>
</dbReference>
<dbReference type="GO" id="GO:0003746">
    <property type="term" value="F:translation elongation factor activity"/>
    <property type="evidence" value="ECO:0007669"/>
    <property type="project" value="UniProtKB-UniRule"/>
</dbReference>
<dbReference type="CDD" id="cd01884">
    <property type="entry name" value="EF_Tu"/>
    <property type="match status" value="1"/>
</dbReference>
<dbReference type="CDD" id="cd03697">
    <property type="entry name" value="EFTU_II"/>
    <property type="match status" value="1"/>
</dbReference>
<dbReference type="CDD" id="cd03707">
    <property type="entry name" value="EFTU_III"/>
    <property type="match status" value="1"/>
</dbReference>
<dbReference type="FunFam" id="2.40.30.10:FF:000001">
    <property type="entry name" value="Elongation factor Tu"/>
    <property type="match status" value="1"/>
</dbReference>
<dbReference type="FunFam" id="3.40.50.300:FF:000003">
    <property type="entry name" value="Elongation factor Tu"/>
    <property type="match status" value="1"/>
</dbReference>
<dbReference type="Gene3D" id="3.40.50.300">
    <property type="entry name" value="P-loop containing nucleotide triphosphate hydrolases"/>
    <property type="match status" value="1"/>
</dbReference>
<dbReference type="Gene3D" id="2.40.30.10">
    <property type="entry name" value="Translation factors"/>
    <property type="match status" value="2"/>
</dbReference>
<dbReference type="HAMAP" id="MF_00118_B">
    <property type="entry name" value="EF_Tu_B"/>
    <property type="match status" value="1"/>
</dbReference>
<dbReference type="InterPro" id="IPR041709">
    <property type="entry name" value="EF-Tu_GTP-bd"/>
</dbReference>
<dbReference type="InterPro" id="IPR050055">
    <property type="entry name" value="EF-Tu_GTPase"/>
</dbReference>
<dbReference type="InterPro" id="IPR004161">
    <property type="entry name" value="EFTu-like_2"/>
</dbReference>
<dbReference type="InterPro" id="IPR033720">
    <property type="entry name" value="EFTU_2"/>
</dbReference>
<dbReference type="InterPro" id="IPR031157">
    <property type="entry name" value="G_TR_CS"/>
</dbReference>
<dbReference type="InterPro" id="IPR027417">
    <property type="entry name" value="P-loop_NTPase"/>
</dbReference>
<dbReference type="InterPro" id="IPR005225">
    <property type="entry name" value="Small_GTP-bd"/>
</dbReference>
<dbReference type="InterPro" id="IPR000795">
    <property type="entry name" value="T_Tr_GTP-bd_dom"/>
</dbReference>
<dbReference type="InterPro" id="IPR009000">
    <property type="entry name" value="Transl_B-barrel_sf"/>
</dbReference>
<dbReference type="InterPro" id="IPR009001">
    <property type="entry name" value="Transl_elong_EF1A/Init_IF2_C"/>
</dbReference>
<dbReference type="InterPro" id="IPR004541">
    <property type="entry name" value="Transl_elong_EFTu/EF1A_bac/org"/>
</dbReference>
<dbReference type="InterPro" id="IPR004160">
    <property type="entry name" value="Transl_elong_EFTu/EF1A_C"/>
</dbReference>
<dbReference type="NCBIfam" id="TIGR00485">
    <property type="entry name" value="EF-Tu"/>
    <property type="match status" value="1"/>
</dbReference>
<dbReference type="NCBIfam" id="NF000766">
    <property type="entry name" value="PRK00049.1"/>
    <property type="match status" value="1"/>
</dbReference>
<dbReference type="NCBIfam" id="NF009372">
    <property type="entry name" value="PRK12735.1"/>
    <property type="match status" value="1"/>
</dbReference>
<dbReference type="NCBIfam" id="NF009373">
    <property type="entry name" value="PRK12736.1"/>
    <property type="match status" value="1"/>
</dbReference>
<dbReference type="NCBIfam" id="TIGR00231">
    <property type="entry name" value="small_GTP"/>
    <property type="match status" value="1"/>
</dbReference>
<dbReference type="PANTHER" id="PTHR43721:SF22">
    <property type="entry name" value="ELONGATION FACTOR TU, MITOCHONDRIAL"/>
    <property type="match status" value="1"/>
</dbReference>
<dbReference type="PANTHER" id="PTHR43721">
    <property type="entry name" value="ELONGATION FACTOR TU-RELATED"/>
    <property type="match status" value="1"/>
</dbReference>
<dbReference type="Pfam" id="PF00009">
    <property type="entry name" value="GTP_EFTU"/>
    <property type="match status" value="1"/>
</dbReference>
<dbReference type="Pfam" id="PF03144">
    <property type="entry name" value="GTP_EFTU_D2"/>
    <property type="match status" value="1"/>
</dbReference>
<dbReference type="Pfam" id="PF03143">
    <property type="entry name" value="GTP_EFTU_D3"/>
    <property type="match status" value="1"/>
</dbReference>
<dbReference type="PRINTS" id="PR00315">
    <property type="entry name" value="ELONGATNFCT"/>
</dbReference>
<dbReference type="SUPFAM" id="SSF50465">
    <property type="entry name" value="EF-Tu/eEF-1alpha/eIF2-gamma C-terminal domain"/>
    <property type="match status" value="1"/>
</dbReference>
<dbReference type="SUPFAM" id="SSF52540">
    <property type="entry name" value="P-loop containing nucleoside triphosphate hydrolases"/>
    <property type="match status" value="1"/>
</dbReference>
<dbReference type="SUPFAM" id="SSF50447">
    <property type="entry name" value="Translation proteins"/>
    <property type="match status" value="1"/>
</dbReference>
<dbReference type="PROSITE" id="PS00301">
    <property type="entry name" value="G_TR_1"/>
    <property type="match status" value="1"/>
</dbReference>
<dbReference type="PROSITE" id="PS51722">
    <property type="entry name" value="G_TR_2"/>
    <property type="match status" value="1"/>
</dbReference>
<evidence type="ECO:0000250" key="1"/>
<evidence type="ECO:0000255" key="2">
    <source>
        <dbReference type="HAMAP-Rule" id="MF_00118"/>
    </source>
</evidence>
<name>EFTU_LACDB</name>
<organism>
    <name type="scientific">Lactobacillus delbrueckii subsp. bulgaricus (strain ATCC BAA-365 / Lb-18)</name>
    <dbReference type="NCBI Taxonomy" id="321956"/>
    <lineage>
        <taxon>Bacteria</taxon>
        <taxon>Bacillati</taxon>
        <taxon>Bacillota</taxon>
        <taxon>Bacilli</taxon>
        <taxon>Lactobacillales</taxon>
        <taxon>Lactobacillaceae</taxon>
        <taxon>Lactobacillus</taxon>
    </lineage>
</organism>
<feature type="chain" id="PRO_0000337415" description="Elongation factor Tu">
    <location>
        <begin position="1"/>
        <end position="396"/>
    </location>
</feature>
<feature type="domain" description="tr-type G">
    <location>
        <begin position="11"/>
        <end position="205"/>
    </location>
</feature>
<feature type="region of interest" description="G1" evidence="1">
    <location>
        <begin position="20"/>
        <end position="27"/>
    </location>
</feature>
<feature type="region of interest" description="G2" evidence="1">
    <location>
        <begin position="61"/>
        <end position="65"/>
    </location>
</feature>
<feature type="region of interest" description="G3" evidence="1">
    <location>
        <begin position="82"/>
        <end position="85"/>
    </location>
</feature>
<feature type="region of interest" description="G4" evidence="1">
    <location>
        <begin position="137"/>
        <end position="140"/>
    </location>
</feature>
<feature type="region of interest" description="G5" evidence="1">
    <location>
        <begin position="175"/>
        <end position="177"/>
    </location>
</feature>
<feature type="binding site" evidence="2">
    <location>
        <begin position="20"/>
        <end position="27"/>
    </location>
    <ligand>
        <name>GTP</name>
        <dbReference type="ChEBI" id="CHEBI:37565"/>
    </ligand>
</feature>
<feature type="binding site" evidence="2">
    <location>
        <position position="27"/>
    </location>
    <ligand>
        <name>Mg(2+)</name>
        <dbReference type="ChEBI" id="CHEBI:18420"/>
    </ligand>
</feature>
<feature type="binding site" evidence="2">
    <location>
        <begin position="82"/>
        <end position="86"/>
    </location>
    <ligand>
        <name>GTP</name>
        <dbReference type="ChEBI" id="CHEBI:37565"/>
    </ligand>
</feature>
<feature type="binding site" evidence="2">
    <location>
        <begin position="137"/>
        <end position="140"/>
    </location>
    <ligand>
        <name>GTP</name>
        <dbReference type="ChEBI" id="CHEBI:37565"/>
    </ligand>
</feature>
<accession>Q04B37</accession>
<proteinExistence type="inferred from homology"/>
<keyword id="KW-0963">Cytoplasm</keyword>
<keyword id="KW-0251">Elongation factor</keyword>
<keyword id="KW-0342">GTP-binding</keyword>
<keyword id="KW-0378">Hydrolase</keyword>
<keyword id="KW-0460">Magnesium</keyword>
<keyword id="KW-0479">Metal-binding</keyword>
<keyword id="KW-0547">Nucleotide-binding</keyword>
<keyword id="KW-0648">Protein biosynthesis</keyword>
<comment type="function">
    <text evidence="2">GTP hydrolase that promotes the GTP-dependent binding of aminoacyl-tRNA to the A-site of ribosomes during protein biosynthesis.</text>
</comment>
<comment type="catalytic activity">
    <reaction evidence="2">
        <text>GTP + H2O = GDP + phosphate + H(+)</text>
        <dbReference type="Rhea" id="RHEA:19669"/>
        <dbReference type="ChEBI" id="CHEBI:15377"/>
        <dbReference type="ChEBI" id="CHEBI:15378"/>
        <dbReference type="ChEBI" id="CHEBI:37565"/>
        <dbReference type="ChEBI" id="CHEBI:43474"/>
        <dbReference type="ChEBI" id="CHEBI:58189"/>
        <dbReference type="EC" id="3.6.5.3"/>
    </reaction>
    <physiologicalReaction direction="left-to-right" evidence="2">
        <dbReference type="Rhea" id="RHEA:19670"/>
    </physiologicalReaction>
</comment>
<comment type="subunit">
    <text evidence="2">Monomer.</text>
</comment>
<comment type="subcellular location">
    <subcellularLocation>
        <location evidence="2">Cytoplasm</location>
    </subcellularLocation>
</comment>
<comment type="similarity">
    <text evidence="2">Belongs to the TRAFAC class translation factor GTPase superfamily. Classic translation factor GTPase family. EF-Tu/EF-1A subfamily.</text>
</comment>